<protein>
    <recommendedName>
        <fullName evidence="1">Dephospho-CoA kinase</fullName>
        <ecNumber evidence="1">2.7.1.24</ecNumber>
    </recommendedName>
    <alternativeName>
        <fullName evidence="1">Dephosphocoenzyme A kinase</fullName>
    </alternativeName>
</protein>
<sequence length="212" mass="23131">MESKLPLLVGVTGGLGSGKSMVCRYLASMGCALFEADVVAKELQVRDSKVIEGITALFGKEVYSYNPKGELQLNRKDIAQVVFSNQEKLGALNRLIHPRVAVAFQQACDNAARSNVAILVKEAAILFESGAHAGLDVVVVVQAATELRVERAVQKGLGTREEILRRLAVQWAPEKLAALADVVIDNNGTPEALYEKTKQLYEQLLQQAMLRR</sequence>
<proteinExistence type="inferred from homology"/>
<evidence type="ECO:0000255" key="1">
    <source>
        <dbReference type="HAMAP-Rule" id="MF_00376"/>
    </source>
</evidence>
<reference key="1">
    <citation type="submission" date="2005-08" db="EMBL/GenBank/DDBJ databases">
        <title>Complete sequence of Chlorobium chlorochromatii CaD3.</title>
        <authorList>
            <consortium name="US DOE Joint Genome Institute"/>
            <person name="Copeland A."/>
            <person name="Lucas S."/>
            <person name="Lapidus A."/>
            <person name="Barry K."/>
            <person name="Detter J.C."/>
            <person name="Glavina T."/>
            <person name="Hammon N."/>
            <person name="Israni S."/>
            <person name="Pitluck S."/>
            <person name="Bryant D."/>
            <person name="Schmutz J."/>
            <person name="Larimer F."/>
            <person name="Land M."/>
            <person name="Kyrpides N."/>
            <person name="Ivanova N."/>
            <person name="Richardson P."/>
        </authorList>
    </citation>
    <scope>NUCLEOTIDE SEQUENCE [LARGE SCALE GENOMIC DNA]</scope>
    <source>
        <strain>CaD3</strain>
    </source>
</reference>
<name>COAE_CHLCH</name>
<keyword id="KW-0067">ATP-binding</keyword>
<keyword id="KW-0173">Coenzyme A biosynthesis</keyword>
<keyword id="KW-0963">Cytoplasm</keyword>
<keyword id="KW-0418">Kinase</keyword>
<keyword id="KW-0547">Nucleotide-binding</keyword>
<keyword id="KW-0808">Transferase</keyword>
<gene>
    <name evidence="1" type="primary">coaE</name>
    <name type="ordered locus">Cag_0965</name>
</gene>
<accession>Q3ARZ7</accession>
<dbReference type="EC" id="2.7.1.24" evidence="1"/>
<dbReference type="EMBL" id="CP000108">
    <property type="protein sequence ID" value="ABB28228.1"/>
    <property type="molecule type" value="Genomic_DNA"/>
</dbReference>
<dbReference type="SMR" id="Q3ARZ7"/>
<dbReference type="STRING" id="340177.Cag_0965"/>
<dbReference type="KEGG" id="cch:Cag_0965"/>
<dbReference type="eggNOG" id="COG0237">
    <property type="taxonomic scope" value="Bacteria"/>
</dbReference>
<dbReference type="HOGENOM" id="CLU_057180_3_1_10"/>
<dbReference type="OrthoDB" id="9812943at2"/>
<dbReference type="UniPathway" id="UPA00241">
    <property type="reaction ID" value="UER00356"/>
</dbReference>
<dbReference type="GO" id="GO:0005737">
    <property type="term" value="C:cytoplasm"/>
    <property type="evidence" value="ECO:0007669"/>
    <property type="project" value="UniProtKB-SubCell"/>
</dbReference>
<dbReference type="GO" id="GO:0005524">
    <property type="term" value="F:ATP binding"/>
    <property type="evidence" value="ECO:0007669"/>
    <property type="project" value="UniProtKB-UniRule"/>
</dbReference>
<dbReference type="GO" id="GO:0004140">
    <property type="term" value="F:dephospho-CoA kinase activity"/>
    <property type="evidence" value="ECO:0007669"/>
    <property type="project" value="UniProtKB-UniRule"/>
</dbReference>
<dbReference type="GO" id="GO:0015937">
    <property type="term" value="P:coenzyme A biosynthetic process"/>
    <property type="evidence" value="ECO:0007669"/>
    <property type="project" value="UniProtKB-UniRule"/>
</dbReference>
<dbReference type="CDD" id="cd02022">
    <property type="entry name" value="DPCK"/>
    <property type="match status" value="1"/>
</dbReference>
<dbReference type="Gene3D" id="3.40.50.300">
    <property type="entry name" value="P-loop containing nucleotide triphosphate hydrolases"/>
    <property type="match status" value="1"/>
</dbReference>
<dbReference type="HAMAP" id="MF_00376">
    <property type="entry name" value="Dephospho_CoA_kinase"/>
    <property type="match status" value="1"/>
</dbReference>
<dbReference type="InterPro" id="IPR001977">
    <property type="entry name" value="Depp_CoAkinase"/>
</dbReference>
<dbReference type="InterPro" id="IPR027417">
    <property type="entry name" value="P-loop_NTPase"/>
</dbReference>
<dbReference type="NCBIfam" id="TIGR00152">
    <property type="entry name" value="dephospho-CoA kinase"/>
    <property type="match status" value="1"/>
</dbReference>
<dbReference type="PANTHER" id="PTHR10695:SF46">
    <property type="entry name" value="BIFUNCTIONAL COENZYME A SYNTHASE-RELATED"/>
    <property type="match status" value="1"/>
</dbReference>
<dbReference type="PANTHER" id="PTHR10695">
    <property type="entry name" value="DEPHOSPHO-COA KINASE-RELATED"/>
    <property type="match status" value="1"/>
</dbReference>
<dbReference type="Pfam" id="PF01121">
    <property type="entry name" value="CoaE"/>
    <property type="match status" value="1"/>
</dbReference>
<dbReference type="SUPFAM" id="SSF52540">
    <property type="entry name" value="P-loop containing nucleoside triphosphate hydrolases"/>
    <property type="match status" value="1"/>
</dbReference>
<dbReference type="PROSITE" id="PS51219">
    <property type="entry name" value="DPCK"/>
    <property type="match status" value="1"/>
</dbReference>
<organism>
    <name type="scientific">Chlorobium chlorochromatii (strain CaD3)</name>
    <dbReference type="NCBI Taxonomy" id="340177"/>
    <lineage>
        <taxon>Bacteria</taxon>
        <taxon>Pseudomonadati</taxon>
        <taxon>Chlorobiota</taxon>
        <taxon>Chlorobiia</taxon>
        <taxon>Chlorobiales</taxon>
        <taxon>Chlorobiaceae</taxon>
        <taxon>Chlorobium/Pelodictyon group</taxon>
        <taxon>Chlorobium</taxon>
    </lineage>
</organism>
<feature type="chain" id="PRO_0000243276" description="Dephospho-CoA kinase">
    <location>
        <begin position="1"/>
        <end position="212"/>
    </location>
</feature>
<feature type="domain" description="DPCK" evidence="1">
    <location>
        <begin position="8"/>
        <end position="212"/>
    </location>
</feature>
<feature type="binding site" evidence="1">
    <location>
        <begin position="16"/>
        <end position="21"/>
    </location>
    <ligand>
        <name>ATP</name>
        <dbReference type="ChEBI" id="CHEBI:30616"/>
    </ligand>
</feature>
<comment type="function">
    <text evidence="1">Catalyzes the phosphorylation of the 3'-hydroxyl group of dephosphocoenzyme A to form coenzyme A.</text>
</comment>
<comment type="catalytic activity">
    <reaction evidence="1">
        <text>3'-dephospho-CoA + ATP = ADP + CoA + H(+)</text>
        <dbReference type="Rhea" id="RHEA:18245"/>
        <dbReference type="ChEBI" id="CHEBI:15378"/>
        <dbReference type="ChEBI" id="CHEBI:30616"/>
        <dbReference type="ChEBI" id="CHEBI:57287"/>
        <dbReference type="ChEBI" id="CHEBI:57328"/>
        <dbReference type="ChEBI" id="CHEBI:456216"/>
        <dbReference type="EC" id="2.7.1.24"/>
    </reaction>
</comment>
<comment type="pathway">
    <text evidence="1">Cofactor biosynthesis; coenzyme A biosynthesis; CoA from (R)-pantothenate: step 5/5.</text>
</comment>
<comment type="subcellular location">
    <subcellularLocation>
        <location evidence="1">Cytoplasm</location>
    </subcellularLocation>
</comment>
<comment type="similarity">
    <text evidence="1">Belongs to the CoaE family.</text>
</comment>